<comment type="function">
    <text evidence="1">Aspartyl-tRNA synthetase with relaxed tRNA specificity since it is able to aspartylate not only its cognate tRNA(Asp) but also tRNA(Asn). Reaction proceeds in two steps: L-aspartate is first activated by ATP to form Asp-AMP and then transferred to the acceptor end of tRNA(Asp/Asn).</text>
</comment>
<comment type="catalytic activity">
    <reaction evidence="1">
        <text>tRNA(Asx) + L-aspartate + ATP = L-aspartyl-tRNA(Asx) + AMP + diphosphate</text>
        <dbReference type="Rhea" id="RHEA:18349"/>
        <dbReference type="Rhea" id="RHEA-COMP:9710"/>
        <dbReference type="Rhea" id="RHEA-COMP:9711"/>
        <dbReference type="ChEBI" id="CHEBI:29991"/>
        <dbReference type="ChEBI" id="CHEBI:30616"/>
        <dbReference type="ChEBI" id="CHEBI:33019"/>
        <dbReference type="ChEBI" id="CHEBI:78442"/>
        <dbReference type="ChEBI" id="CHEBI:78516"/>
        <dbReference type="ChEBI" id="CHEBI:456215"/>
        <dbReference type="EC" id="6.1.1.23"/>
    </reaction>
</comment>
<comment type="subunit">
    <text evidence="1">Homodimer.</text>
</comment>
<comment type="subcellular location">
    <subcellularLocation>
        <location evidence="1">Cytoplasm</location>
    </subcellularLocation>
</comment>
<comment type="similarity">
    <text evidence="1">Belongs to the class-II aminoacyl-tRNA synthetase family. Type 1 subfamily.</text>
</comment>
<organism>
    <name type="scientific">Pelagibacter ubique (strain HTCC1062)</name>
    <dbReference type="NCBI Taxonomy" id="335992"/>
    <lineage>
        <taxon>Bacteria</taxon>
        <taxon>Pseudomonadati</taxon>
        <taxon>Pseudomonadota</taxon>
        <taxon>Alphaproteobacteria</taxon>
        <taxon>Candidatus Pelagibacterales</taxon>
        <taxon>Candidatus Pelagibacteraceae</taxon>
        <taxon>Candidatus Pelagibacter</taxon>
    </lineage>
</organism>
<evidence type="ECO:0000255" key="1">
    <source>
        <dbReference type="HAMAP-Rule" id="MF_00044"/>
    </source>
</evidence>
<proteinExistence type="inferred from homology"/>
<reference key="1">
    <citation type="journal article" date="2005" name="Science">
        <title>Genome streamlining in a cosmopolitan oceanic bacterium.</title>
        <authorList>
            <person name="Giovannoni S.J."/>
            <person name="Tripp H.J."/>
            <person name="Givan S."/>
            <person name="Podar M."/>
            <person name="Vergin K.L."/>
            <person name="Baptista D."/>
            <person name="Bibbs L."/>
            <person name="Eads J."/>
            <person name="Richardson T.H."/>
            <person name="Noordewier M."/>
            <person name="Rappe M.S."/>
            <person name="Short J.M."/>
            <person name="Carrington J.C."/>
            <person name="Mathur E.J."/>
        </authorList>
    </citation>
    <scope>NUCLEOTIDE SEQUENCE [LARGE SCALE GENOMIC DNA]</scope>
    <source>
        <strain>HTCC1062</strain>
    </source>
</reference>
<dbReference type="EC" id="6.1.1.23" evidence="1"/>
<dbReference type="EMBL" id="CP000084">
    <property type="protein sequence ID" value="AAZ21541.1"/>
    <property type="molecule type" value="Genomic_DNA"/>
</dbReference>
<dbReference type="RefSeq" id="WP_011281891.1">
    <property type="nucleotide sequence ID" value="NC_007205.1"/>
</dbReference>
<dbReference type="SMR" id="Q4FMP8"/>
<dbReference type="STRING" id="335992.SAR11_0722"/>
<dbReference type="GeneID" id="66295225"/>
<dbReference type="KEGG" id="pub:SAR11_0722"/>
<dbReference type="eggNOG" id="COG0173">
    <property type="taxonomic scope" value="Bacteria"/>
</dbReference>
<dbReference type="HOGENOM" id="CLU_014330_3_2_5"/>
<dbReference type="OrthoDB" id="9802326at2"/>
<dbReference type="Proteomes" id="UP000002528">
    <property type="component" value="Chromosome"/>
</dbReference>
<dbReference type="GO" id="GO:0005737">
    <property type="term" value="C:cytoplasm"/>
    <property type="evidence" value="ECO:0007669"/>
    <property type="project" value="UniProtKB-SubCell"/>
</dbReference>
<dbReference type="GO" id="GO:0004815">
    <property type="term" value="F:aspartate-tRNA ligase activity"/>
    <property type="evidence" value="ECO:0007669"/>
    <property type="project" value="UniProtKB-UniRule"/>
</dbReference>
<dbReference type="GO" id="GO:0050560">
    <property type="term" value="F:aspartate-tRNA(Asn) ligase activity"/>
    <property type="evidence" value="ECO:0007669"/>
    <property type="project" value="UniProtKB-EC"/>
</dbReference>
<dbReference type="GO" id="GO:0005524">
    <property type="term" value="F:ATP binding"/>
    <property type="evidence" value="ECO:0007669"/>
    <property type="project" value="UniProtKB-UniRule"/>
</dbReference>
<dbReference type="GO" id="GO:0003676">
    <property type="term" value="F:nucleic acid binding"/>
    <property type="evidence" value="ECO:0007669"/>
    <property type="project" value="InterPro"/>
</dbReference>
<dbReference type="GO" id="GO:0006422">
    <property type="term" value="P:aspartyl-tRNA aminoacylation"/>
    <property type="evidence" value="ECO:0007669"/>
    <property type="project" value="UniProtKB-UniRule"/>
</dbReference>
<dbReference type="CDD" id="cd00777">
    <property type="entry name" value="AspRS_core"/>
    <property type="match status" value="1"/>
</dbReference>
<dbReference type="CDD" id="cd04317">
    <property type="entry name" value="EcAspRS_like_N"/>
    <property type="match status" value="1"/>
</dbReference>
<dbReference type="Gene3D" id="3.30.930.10">
    <property type="entry name" value="Bira Bifunctional Protein, Domain 2"/>
    <property type="match status" value="1"/>
</dbReference>
<dbReference type="Gene3D" id="3.30.1360.30">
    <property type="entry name" value="GAD-like domain"/>
    <property type="match status" value="1"/>
</dbReference>
<dbReference type="Gene3D" id="2.40.50.140">
    <property type="entry name" value="Nucleic acid-binding proteins"/>
    <property type="match status" value="1"/>
</dbReference>
<dbReference type="HAMAP" id="MF_00044">
    <property type="entry name" value="Asp_tRNA_synth_type1"/>
    <property type="match status" value="1"/>
</dbReference>
<dbReference type="InterPro" id="IPR004364">
    <property type="entry name" value="Aa-tRNA-synt_II"/>
</dbReference>
<dbReference type="InterPro" id="IPR006195">
    <property type="entry name" value="aa-tRNA-synth_II"/>
</dbReference>
<dbReference type="InterPro" id="IPR045864">
    <property type="entry name" value="aa-tRNA-synth_II/BPL/LPL"/>
</dbReference>
<dbReference type="InterPro" id="IPR004524">
    <property type="entry name" value="Asp-tRNA-ligase_1"/>
</dbReference>
<dbReference type="InterPro" id="IPR047089">
    <property type="entry name" value="Asp-tRNA-ligase_1_N"/>
</dbReference>
<dbReference type="InterPro" id="IPR002312">
    <property type="entry name" value="Asp/Asn-tRNA-synth_IIb"/>
</dbReference>
<dbReference type="InterPro" id="IPR047090">
    <property type="entry name" value="AspRS_core"/>
</dbReference>
<dbReference type="InterPro" id="IPR004115">
    <property type="entry name" value="GAD-like_sf"/>
</dbReference>
<dbReference type="InterPro" id="IPR029351">
    <property type="entry name" value="GAD_dom"/>
</dbReference>
<dbReference type="InterPro" id="IPR012340">
    <property type="entry name" value="NA-bd_OB-fold"/>
</dbReference>
<dbReference type="InterPro" id="IPR004365">
    <property type="entry name" value="NA-bd_OB_tRNA"/>
</dbReference>
<dbReference type="NCBIfam" id="TIGR00459">
    <property type="entry name" value="aspS_bact"/>
    <property type="match status" value="1"/>
</dbReference>
<dbReference type="NCBIfam" id="NF001750">
    <property type="entry name" value="PRK00476.1"/>
    <property type="match status" value="1"/>
</dbReference>
<dbReference type="PANTHER" id="PTHR22594:SF5">
    <property type="entry name" value="ASPARTATE--TRNA LIGASE, MITOCHONDRIAL"/>
    <property type="match status" value="1"/>
</dbReference>
<dbReference type="PANTHER" id="PTHR22594">
    <property type="entry name" value="ASPARTYL/LYSYL-TRNA SYNTHETASE"/>
    <property type="match status" value="1"/>
</dbReference>
<dbReference type="Pfam" id="PF02938">
    <property type="entry name" value="GAD"/>
    <property type="match status" value="1"/>
</dbReference>
<dbReference type="Pfam" id="PF00152">
    <property type="entry name" value="tRNA-synt_2"/>
    <property type="match status" value="1"/>
</dbReference>
<dbReference type="Pfam" id="PF01336">
    <property type="entry name" value="tRNA_anti-codon"/>
    <property type="match status" value="1"/>
</dbReference>
<dbReference type="PRINTS" id="PR01042">
    <property type="entry name" value="TRNASYNTHASP"/>
</dbReference>
<dbReference type="SUPFAM" id="SSF55681">
    <property type="entry name" value="Class II aaRS and biotin synthetases"/>
    <property type="match status" value="1"/>
</dbReference>
<dbReference type="SUPFAM" id="SSF55261">
    <property type="entry name" value="GAD domain-like"/>
    <property type="match status" value="1"/>
</dbReference>
<dbReference type="SUPFAM" id="SSF50249">
    <property type="entry name" value="Nucleic acid-binding proteins"/>
    <property type="match status" value="1"/>
</dbReference>
<dbReference type="PROSITE" id="PS50862">
    <property type="entry name" value="AA_TRNA_LIGASE_II"/>
    <property type="match status" value="1"/>
</dbReference>
<accession>Q4FMP8</accession>
<name>SYDND_PELUB</name>
<feature type="chain" id="PRO_0000235539" description="Aspartate--tRNA(Asp/Asn) ligase">
    <location>
        <begin position="1"/>
        <end position="594"/>
    </location>
</feature>
<feature type="region of interest" description="Aspartate" evidence="1">
    <location>
        <begin position="199"/>
        <end position="202"/>
    </location>
</feature>
<feature type="binding site" evidence="1">
    <location>
        <position position="175"/>
    </location>
    <ligand>
        <name>L-aspartate</name>
        <dbReference type="ChEBI" id="CHEBI:29991"/>
    </ligand>
</feature>
<feature type="binding site" evidence="1">
    <location>
        <begin position="221"/>
        <end position="223"/>
    </location>
    <ligand>
        <name>ATP</name>
        <dbReference type="ChEBI" id="CHEBI:30616"/>
    </ligand>
</feature>
<feature type="binding site" evidence="1">
    <location>
        <position position="221"/>
    </location>
    <ligand>
        <name>L-aspartate</name>
        <dbReference type="ChEBI" id="CHEBI:29991"/>
    </ligand>
</feature>
<feature type="binding site" evidence="1">
    <location>
        <position position="455"/>
    </location>
    <ligand>
        <name>L-aspartate</name>
        <dbReference type="ChEBI" id="CHEBI:29991"/>
    </ligand>
</feature>
<feature type="binding site" evidence="1">
    <location>
        <position position="489"/>
    </location>
    <ligand>
        <name>ATP</name>
        <dbReference type="ChEBI" id="CHEBI:30616"/>
    </ligand>
</feature>
<feature type="binding site" evidence="1">
    <location>
        <position position="496"/>
    </location>
    <ligand>
        <name>L-aspartate</name>
        <dbReference type="ChEBI" id="CHEBI:29991"/>
    </ligand>
</feature>
<feature type="binding site" evidence="1">
    <location>
        <begin position="541"/>
        <end position="544"/>
    </location>
    <ligand>
        <name>ATP</name>
        <dbReference type="ChEBI" id="CHEBI:30616"/>
    </ligand>
</feature>
<feature type="site" description="Important for tRNA non-discrimination" evidence="1">
    <location>
        <position position="33"/>
    </location>
</feature>
<sequence>MNKYRTHTCSELTIDSRGKDVVLSGWINKKRDHGNLLFIDLRDNYGMTQCIIDKSNQNFNSLEKIQLESVIKINGKVVERTKETINTDLQTGEIEVNINSFEVLGTCKELPMPVFSDQEYAEEIRLKYRFLDLRRKKIHDNIILRSKVISFIRSEMSKLGFLEFQTPILTSSSPEGARDFLVPSRLNPGKFYALPQAPQQFKQLIMVSGFDKYFQIAPCFRDEDARADRSPGEFYQLDLEMSFVEQEDVFQVVEKLIVNVFKKFSEKKLMYEKFPRIPYEESMLKYGSDKPDLRNPLIISDLSNIFIRDDVTFEIFKKLVKSGSKVRCIVTKNTKDKPRSFFDNIDKWAKEQGASGLAYFTIEKEENISARGPVGKFFSKEALEEIMKITGAEIGDSIFFACGKINDVEKITSLARDKIAKDLKLIDENTFAFCWVVDYPMFEKNEVTNKIEFSHNPFSMPQGDLKDIDFDNPLNIKAYQYDIVCNGIELSSGAIRNHVPELMYKLFSIAGYQKEQVDEKFSGMINALSYGAPPHGGIAPGIDRIVMLLANEKNIREVTMFPMNQNAQDLMMNAPSNVNEEQLKELGLALKLKK</sequence>
<gene>
    <name evidence="1" type="primary">aspS</name>
    <name type="ordered locus">SAR11_0722</name>
</gene>
<keyword id="KW-0030">Aminoacyl-tRNA synthetase</keyword>
<keyword id="KW-0067">ATP-binding</keyword>
<keyword id="KW-0963">Cytoplasm</keyword>
<keyword id="KW-0436">Ligase</keyword>
<keyword id="KW-0547">Nucleotide-binding</keyword>
<keyword id="KW-0648">Protein biosynthesis</keyword>
<keyword id="KW-1185">Reference proteome</keyword>
<protein>
    <recommendedName>
        <fullName evidence="1">Aspartate--tRNA(Asp/Asn) ligase</fullName>
        <ecNumber evidence="1">6.1.1.23</ecNumber>
    </recommendedName>
    <alternativeName>
        <fullName evidence="1">Aspartyl-tRNA synthetase</fullName>
        <shortName evidence="1">AspRS</shortName>
    </alternativeName>
    <alternativeName>
        <fullName evidence="1">Non-discriminating aspartyl-tRNA synthetase</fullName>
        <shortName evidence="1">ND-AspRS</shortName>
    </alternativeName>
</protein>